<organism>
    <name type="scientific">Brucella suis (strain ATCC 23445 / NCTC 10510)</name>
    <dbReference type="NCBI Taxonomy" id="470137"/>
    <lineage>
        <taxon>Bacteria</taxon>
        <taxon>Pseudomonadati</taxon>
        <taxon>Pseudomonadota</taxon>
        <taxon>Alphaproteobacteria</taxon>
        <taxon>Hyphomicrobiales</taxon>
        <taxon>Brucellaceae</taxon>
        <taxon>Brucella/Ochrobactrum group</taxon>
        <taxon>Brucella</taxon>
    </lineage>
</organism>
<feature type="chain" id="PRO_1000080550" description="Phosphoribosylformylglycinamidine synthase subunit PurL">
    <location>
        <begin position="1"/>
        <end position="740"/>
    </location>
</feature>
<feature type="active site" evidence="1">
    <location>
        <position position="50"/>
    </location>
</feature>
<feature type="active site" description="Proton acceptor" evidence="1">
    <location>
        <position position="96"/>
    </location>
</feature>
<feature type="binding site" evidence="1">
    <location>
        <position position="53"/>
    </location>
    <ligand>
        <name>ATP</name>
        <dbReference type="ChEBI" id="CHEBI:30616"/>
    </ligand>
</feature>
<feature type="binding site" evidence="1">
    <location>
        <position position="92"/>
    </location>
    <ligand>
        <name>ATP</name>
        <dbReference type="ChEBI" id="CHEBI:30616"/>
    </ligand>
</feature>
<feature type="binding site" evidence="1">
    <location>
        <position position="94"/>
    </location>
    <ligand>
        <name>Mg(2+)</name>
        <dbReference type="ChEBI" id="CHEBI:18420"/>
        <label>1</label>
    </ligand>
</feature>
<feature type="binding site" evidence="1">
    <location>
        <begin position="95"/>
        <end position="98"/>
    </location>
    <ligand>
        <name>substrate</name>
    </ligand>
</feature>
<feature type="binding site" evidence="1">
    <location>
        <position position="117"/>
    </location>
    <ligand>
        <name>substrate</name>
    </ligand>
</feature>
<feature type="binding site" evidence="1">
    <location>
        <position position="118"/>
    </location>
    <ligand>
        <name>Mg(2+)</name>
        <dbReference type="ChEBI" id="CHEBI:18420"/>
        <label>2</label>
    </ligand>
</feature>
<feature type="binding site" evidence="1">
    <location>
        <position position="241"/>
    </location>
    <ligand>
        <name>substrate</name>
    </ligand>
</feature>
<feature type="binding site" evidence="1">
    <location>
        <position position="269"/>
    </location>
    <ligand>
        <name>Mg(2+)</name>
        <dbReference type="ChEBI" id="CHEBI:18420"/>
        <label>2</label>
    </ligand>
</feature>
<feature type="binding site" evidence="1">
    <location>
        <begin position="313"/>
        <end position="315"/>
    </location>
    <ligand>
        <name>substrate</name>
    </ligand>
</feature>
<feature type="binding site" evidence="1">
    <location>
        <position position="495"/>
    </location>
    <ligand>
        <name>ATP</name>
        <dbReference type="ChEBI" id="CHEBI:30616"/>
    </ligand>
</feature>
<feature type="binding site" evidence="1">
    <location>
        <position position="532"/>
    </location>
    <ligand>
        <name>ATP</name>
        <dbReference type="ChEBI" id="CHEBI:30616"/>
    </ligand>
</feature>
<feature type="binding site" evidence="1">
    <location>
        <position position="533"/>
    </location>
    <ligand>
        <name>Mg(2+)</name>
        <dbReference type="ChEBI" id="CHEBI:18420"/>
        <label>1</label>
    </ligand>
</feature>
<feature type="binding site" evidence="1">
    <location>
        <position position="535"/>
    </location>
    <ligand>
        <name>substrate</name>
    </ligand>
</feature>
<sequence length="740" mass="79117">MTISNTRDITPELIEAHGLKPDEYQRILELIGREPTFTELGIFSAMWNEHCSYKSSKKWLRTLPTSGPRVIQGPGENAGVVDIGDGDCVVFKMESHNHPSYIEPYQGAATGVGGILRDVFTMGARPVAAMNALRFGEPDHPKTRHLVSGVVSGVGGYGNAFGVPTVGGEVNFDKRYNGNILVNAFAAGLARHDGIFLSEAKGVGLPVVYLGAKTGRDGVGGATMASAEFDESIEEKRPTVQVGDPFTEKCLLEACLELMASGAVIAIQDMGAAGLTCSAVEMGAKGDLGIELILDHVPVREENMTAYEMMLSESQERMLMVLKPEKEAEAQAIFRKWGLDFAIVGKTTDDLRFRVIHQGEEVANLPIKDLGDEAPEYDRPWMEPGKHAPLPASNVPQVEDYSAALLKLIGSPDLSSRRWVYEQYDTLIQGNSLQVPGGDAGVIRVEGHETKALAFSSDVTPRYCEADPFEGGKQAVAECWRNITATGAEPLASTDNLNFGNPEKPEIMGQLVKAIEGIGEACRALDFPIVSGNVSLYNETNGQAILPTPTIAGVGLLPDWSQMAKIGGMQDGDTLVLLGGDGTHLGQSVYLRDLFDRADGPAPFVDLALEKRNGEFVRSAIRNGQVTACHDLSDGGLAIAVAEMAIKSGKGATLDAGDGLPHALLFGEDQARYVISATPEMAKLIALNAEGAGVPFRILGTVGGDRLKISKNVDVSVADLTQAYEGWFPNFMNGELTGNN</sequence>
<dbReference type="EC" id="6.3.5.3" evidence="1"/>
<dbReference type="EMBL" id="CP000911">
    <property type="protein sequence ID" value="ABY37944.1"/>
    <property type="molecule type" value="Genomic_DNA"/>
</dbReference>
<dbReference type="RefSeq" id="WP_004688249.1">
    <property type="nucleotide sequence ID" value="NC_010169.1"/>
</dbReference>
<dbReference type="SMR" id="B0CLG4"/>
<dbReference type="GeneID" id="97533862"/>
<dbReference type="KEGG" id="bmt:BSUIS_A0876"/>
<dbReference type="HOGENOM" id="CLU_003100_0_1_5"/>
<dbReference type="UniPathway" id="UPA00074">
    <property type="reaction ID" value="UER00128"/>
</dbReference>
<dbReference type="PRO" id="PR:B0CLG4"/>
<dbReference type="Proteomes" id="UP000008545">
    <property type="component" value="Chromosome I"/>
</dbReference>
<dbReference type="GO" id="GO:0005737">
    <property type="term" value="C:cytoplasm"/>
    <property type="evidence" value="ECO:0007669"/>
    <property type="project" value="UniProtKB-SubCell"/>
</dbReference>
<dbReference type="GO" id="GO:0005524">
    <property type="term" value="F:ATP binding"/>
    <property type="evidence" value="ECO:0007669"/>
    <property type="project" value="UniProtKB-UniRule"/>
</dbReference>
<dbReference type="GO" id="GO:0000287">
    <property type="term" value="F:magnesium ion binding"/>
    <property type="evidence" value="ECO:0007669"/>
    <property type="project" value="UniProtKB-UniRule"/>
</dbReference>
<dbReference type="GO" id="GO:0004642">
    <property type="term" value="F:phosphoribosylformylglycinamidine synthase activity"/>
    <property type="evidence" value="ECO:0007669"/>
    <property type="project" value="UniProtKB-UniRule"/>
</dbReference>
<dbReference type="GO" id="GO:0006189">
    <property type="term" value="P:'de novo' IMP biosynthetic process"/>
    <property type="evidence" value="ECO:0007669"/>
    <property type="project" value="UniProtKB-UniRule"/>
</dbReference>
<dbReference type="CDD" id="cd02203">
    <property type="entry name" value="PurL_repeat1"/>
    <property type="match status" value="1"/>
</dbReference>
<dbReference type="CDD" id="cd02204">
    <property type="entry name" value="PurL_repeat2"/>
    <property type="match status" value="1"/>
</dbReference>
<dbReference type="FunFam" id="3.30.1330.10:FF:000004">
    <property type="entry name" value="Phosphoribosylformylglycinamidine synthase subunit PurL"/>
    <property type="match status" value="1"/>
</dbReference>
<dbReference type="Gene3D" id="3.90.650.10">
    <property type="entry name" value="PurM-like C-terminal domain"/>
    <property type="match status" value="2"/>
</dbReference>
<dbReference type="Gene3D" id="3.30.1330.10">
    <property type="entry name" value="PurM-like, N-terminal domain"/>
    <property type="match status" value="2"/>
</dbReference>
<dbReference type="HAMAP" id="MF_00420">
    <property type="entry name" value="PurL_2"/>
    <property type="match status" value="1"/>
</dbReference>
<dbReference type="InterPro" id="IPR010074">
    <property type="entry name" value="PRibForGlyAmidine_synth_PurL"/>
</dbReference>
<dbReference type="InterPro" id="IPR041609">
    <property type="entry name" value="PurL_linker"/>
</dbReference>
<dbReference type="InterPro" id="IPR010918">
    <property type="entry name" value="PurM-like_C_dom"/>
</dbReference>
<dbReference type="InterPro" id="IPR036676">
    <property type="entry name" value="PurM-like_C_sf"/>
</dbReference>
<dbReference type="InterPro" id="IPR016188">
    <property type="entry name" value="PurM-like_N"/>
</dbReference>
<dbReference type="InterPro" id="IPR036921">
    <property type="entry name" value="PurM-like_N_sf"/>
</dbReference>
<dbReference type="NCBIfam" id="TIGR01736">
    <property type="entry name" value="FGAM_synth_II"/>
    <property type="match status" value="1"/>
</dbReference>
<dbReference type="NCBIfam" id="NF002290">
    <property type="entry name" value="PRK01213.1"/>
    <property type="match status" value="1"/>
</dbReference>
<dbReference type="PANTHER" id="PTHR43555">
    <property type="entry name" value="PHOSPHORIBOSYLFORMYLGLYCINAMIDINE SYNTHASE SUBUNIT PURL"/>
    <property type="match status" value="1"/>
</dbReference>
<dbReference type="PANTHER" id="PTHR43555:SF1">
    <property type="entry name" value="PHOSPHORIBOSYLFORMYLGLYCINAMIDINE SYNTHASE SUBUNIT PURL"/>
    <property type="match status" value="1"/>
</dbReference>
<dbReference type="Pfam" id="PF00586">
    <property type="entry name" value="AIRS"/>
    <property type="match status" value="2"/>
</dbReference>
<dbReference type="Pfam" id="PF02769">
    <property type="entry name" value="AIRS_C"/>
    <property type="match status" value="2"/>
</dbReference>
<dbReference type="Pfam" id="PF18072">
    <property type="entry name" value="FGAR-AT_linker"/>
    <property type="match status" value="1"/>
</dbReference>
<dbReference type="PIRSF" id="PIRSF001587">
    <property type="entry name" value="FGAM_synthase_II"/>
    <property type="match status" value="1"/>
</dbReference>
<dbReference type="SUPFAM" id="SSF56042">
    <property type="entry name" value="PurM C-terminal domain-like"/>
    <property type="match status" value="2"/>
</dbReference>
<dbReference type="SUPFAM" id="SSF55326">
    <property type="entry name" value="PurM N-terminal domain-like"/>
    <property type="match status" value="2"/>
</dbReference>
<reference key="1">
    <citation type="submission" date="2007-12" db="EMBL/GenBank/DDBJ databases">
        <title>Brucella suis ATCC 23445 whole genome shotgun sequencing project.</title>
        <authorList>
            <person name="Setubal J.C."/>
            <person name="Bowns C."/>
            <person name="Boyle S."/>
            <person name="Crasta O.R."/>
            <person name="Czar M.J."/>
            <person name="Dharmanolla C."/>
            <person name="Gillespie J.J."/>
            <person name="Kenyon R.W."/>
            <person name="Lu J."/>
            <person name="Mane S."/>
            <person name="Mohapatra S."/>
            <person name="Nagrani S."/>
            <person name="Purkayastha A."/>
            <person name="Rajasimha H.K."/>
            <person name="Shallom J.M."/>
            <person name="Shallom S."/>
            <person name="Shukla M."/>
            <person name="Snyder E.E."/>
            <person name="Sobral B.W."/>
            <person name="Wattam A.R."/>
            <person name="Will R."/>
            <person name="Williams K."/>
            <person name="Yoo H."/>
            <person name="Bruce D."/>
            <person name="Detter C."/>
            <person name="Munk C."/>
            <person name="Brettin T.S."/>
        </authorList>
    </citation>
    <scope>NUCLEOTIDE SEQUENCE [LARGE SCALE GENOMIC DNA]</scope>
    <source>
        <strain>ATCC 23445 / NCTC 10510</strain>
    </source>
</reference>
<evidence type="ECO:0000255" key="1">
    <source>
        <dbReference type="HAMAP-Rule" id="MF_00420"/>
    </source>
</evidence>
<accession>B0CLG4</accession>
<keyword id="KW-0067">ATP-binding</keyword>
<keyword id="KW-0963">Cytoplasm</keyword>
<keyword id="KW-0436">Ligase</keyword>
<keyword id="KW-0460">Magnesium</keyword>
<keyword id="KW-0479">Metal-binding</keyword>
<keyword id="KW-0547">Nucleotide-binding</keyword>
<keyword id="KW-0658">Purine biosynthesis</keyword>
<protein>
    <recommendedName>
        <fullName evidence="1">Phosphoribosylformylglycinamidine synthase subunit PurL</fullName>
        <shortName evidence="1">FGAM synthase</shortName>
        <ecNumber evidence="1">6.3.5.3</ecNumber>
    </recommendedName>
    <alternativeName>
        <fullName evidence="1">Formylglycinamide ribonucleotide amidotransferase subunit II</fullName>
        <shortName evidence="1">FGAR amidotransferase II</shortName>
        <shortName evidence="1">FGAR-AT II</shortName>
    </alternativeName>
    <alternativeName>
        <fullName evidence="1">Glutamine amidotransferase PurL</fullName>
    </alternativeName>
    <alternativeName>
        <fullName evidence="1">Phosphoribosylformylglycinamidine synthase subunit II</fullName>
    </alternativeName>
</protein>
<proteinExistence type="inferred from homology"/>
<name>PURL_BRUSI</name>
<comment type="function">
    <text evidence="1">Part of the phosphoribosylformylglycinamidine synthase complex involved in the purines biosynthetic pathway. Catalyzes the ATP-dependent conversion of formylglycinamide ribonucleotide (FGAR) and glutamine to yield formylglycinamidine ribonucleotide (FGAM) and glutamate. The FGAM synthase complex is composed of three subunits. PurQ produces an ammonia molecule by converting glutamine to glutamate. PurL transfers the ammonia molecule to FGAR to form FGAM in an ATP-dependent manner. PurS interacts with PurQ and PurL and is thought to assist in the transfer of the ammonia molecule from PurQ to PurL.</text>
</comment>
<comment type="catalytic activity">
    <reaction evidence="1">
        <text>N(2)-formyl-N(1)-(5-phospho-beta-D-ribosyl)glycinamide + L-glutamine + ATP + H2O = 2-formamido-N(1)-(5-O-phospho-beta-D-ribosyl)acetamidine + L-glutamate + ADP + phosphate + H(+)</text>
        <dbReference type="Rhea" id="RHEA:17129"/>
        <dbReference type="ChEBI" id="CHEBI:15377"/>
        <dbReference type="ChEBI" id="CHEBI:15378"/>
        <dbReference type="ChEBI" id="CHEBI:29985"/>
        <dbReference type="ChEBI" id="CHEBI:30616"/>
        <dbReference type="ChEBI" id="CHEBI:43474"/>
        <dbReference type="ChEBI" id="CHEBI:58359"/>
        <dbReference type="ChEBI" id="CHEBI:147286"/>
        <dbReference type="ChEBI" id="CHEBI:147287"/>
        <dbReference type="ChEBI" id="CHEBI:456216"/>
        <dbReference type="EC" id="6.3.5.3"/>
    </reaction>
</comment>
<comment type="pathway">
    <text evidence="1">Purine metabolism; IMP biosynthesis via de novo pathway; 5-amino-1-(5-phospho-D-ribosyl)imidazole from N(2)-formyl-N(1)-(5-phospho-D-ribosyl)glycinamide: step 1/2.</text>
</comment>
<comment type="subunit">
    <text evidence="1">Monomer. Part of the FGAM synthase complex composed of 1 PurL, 1 PurQ and 2 PurS subunits.</text>
</comment>
<comment type="subcellular location">
    <subcellularLocation>
        <location evidence="1">Cytoplasm</location>
    </subcellularLocation>
</comment>
<comment type="similarity">
    <text evidence="1">Belongs to the FGAMS family.</text>
</comment>
<gene>
    <name evidence="1" type="primary">purL</name>
    <name type="ordered locus">BSUIS_A0876</name>
</gene>